<protein>
    <recommendedName>
        <fullName>Heat shock 70 kDa protein C</fullName>
    </recommendedName>
</protein>
<name>HSP7C_CAEEL</name>
<proteinExistence type="evidence at protein level"/>
<keyword id="KW-0067">ATP-binding</keyword>
<keyword id="KW-0256">Endoplasmic reticulum</keyword>
<keyword id="KW-0547">Nucleotide-binding</keyword>
<keyword id="KW-1185">Reference proteome</keyword>
<keyword id="KW-0732">Signal</keyword>
<keyword id="KW-0346">Stress response</keyword>
<gene>
    <name type="primary">hsp-3</name>
    <name type="synonym">hsp70c</name>
    <name type="ORF">C15H9.6</name>
</gene>
<reference key="1">
    <citation type="journal article" date="1989" name="DNA">
        <title>Characterization of the hsp70 multigene family of Caenorhabditis elegans.</title>
        <authorList>
            <person name="Heschl M.F.P."/>
            <person name="Baillie D.L."/>
        </authorList>
    </citation>
    <scope>NUCLEOTIDE SEQUENCE [GENOMIC DNA]</scope>
</reference>
<reference key="2">
    <citation type="journal article" date="1998" name="Science">
        <title>Genome sequence of the nematode C. elegans: a platform for investigating biology.</title>
        <authorList>
            <consortium name="The C. elegans sequencing consortium"/>
        </authorList>
    </citation>
    <scope>NUCLEOTIDE SEQUENCE [LARGE SCALE GENOMIC DNA]</scope>
    <source>
        <strain>Bristol N2</strain>
    </source>
</reference>
<reference key="3">
    <citation type="journal article" date="2016" name="PLoS Genet.">
        <title>The Caenorhabditis elegans protein FIC-1 is an AMPylase that covalently modifies heat-shock 70 family proteins, translation elongation factors and histones.</title>
        <authorList>
            <person name="Truttmann M.C."/>
            <person name="Cruz V.E."/>
            <person name="Guo X."/>
            <person name="Engert C."/>
            <person name="Schwartz T.U."/>
            <person name="Ploegh H.L."/>
        </authorList>
    </citation>
    <scope>AMPYLATION</scope>
    <scope>IDENTIFICATION BY MASS SPECTROMETRY</scope>
</reference>
<feature type="signal peptide" evidence="2">
    <location>
        <begin position="1"/>
        <end position="17"/>
    </location>
</feature>
<feature type="chain" id="PRO_0000013541" description="Heat shock 70 kDa protein C">
    <location>
        <begin position="18"/>
        <end position="661"/>
    </location>
</feature>
<feature type="region of interest" description="Disordered" evidence="3">
    <location>
        <begin position="639"/>
        <end position="661"/>
    </location>
</feature>
<feature type="short sequence motif" description="Prevents secretion from ER">
    <location>
        <begin position="658"/>
        <end position="661"/>
    </location>
</feature>
<feature type="compositionally biased region" description="Acidic residues" evidence="3">
    <location>
        <begin position="649"/>
        <end position="661"/>
    </location>
</feature>
<feature type="sequence conflict" description="In Ref. 1; AAA28074." evidence="5" ref="1">
    <original>L</original>
    <variation>M</variation>
    <location>
        <position position="9"/>
    </location>
</feature>
<feature type="sequence conflict" description="In Ref. 1; AAA28074." evidence="5" ref="1">
    <original>LS</original>
    <variation>IT</variation>
    <location>
        <begin position="12"/>
        <end position="13"/>
    </location>
</feature>
<feature type="sequence conflict" description="In Ref. 1; AAA28074." evidence="5" ref="1">
    <original>V</original>
    <variation>I</variation>
    <location>
        <position position="17"/>
    </location>
</feature>
<feature type="sequence conflict" description="In Ref. 1; AAA28074." evidence="5" ref="1">
    <original>E</original>
    <variation>K</variation>
    <location>
        <position position="20"/>
    </location>
</feature>
<feature type="sequence conflict" description="In Ref. 1; AAA28074." evidence="5" ref="1">
    <original>G</original>
    <variation>E</variation>
    <location>
        <position position="33"/>
    </location>
</feature>
<feature type="sequence conflict" description="In Ref. 1; AAA28074." evidence="5" ref="1">
    <original>R</original>
    <variation>A</variation>
    <location>
        <position position="545"/>
    </location>
</feature>
<feature type="sequence conflict" description="In Ref. 1; AAA28074." evidence="5" ref="1">
    <original>GEEAPEEGS</original>
    <variation>ERRPQKRDL</variation>
    <location>
        <begin position="647"/>
        <end position="655"/>
    </location>
</feature>
<evidence type="ECO:0000250" key="1"/>
<evidence type="ECO:0000255" key="2"/>
<evidence type="ECO:0000256" key="3">
    <source>
        <dbReference type="SAM" id="MobiDB-lite"/>
    </source>
</evidence>
<evidence type="ECO:0000269" key="4">
    <source>
    </source>
</evidence>
<evidence type="ECO:0000305" key="5"/>
<sequence>MKTLFLLGLIALSAVSVYCEEEEKTEKKETKYGTIIGIDLGTTYSCVGVYKNGRVEIIANDQGNRITPSYVAFSGDQGDRLIGDAAKNQLTINPENTIFDAKRLIGRDYNDKTVQADIKHWPFKVIDKSNKPSVEVKVGSDNKQFTPEEVSAMVLVKMKEIAESYLGKEVKNAVVTVPAYFNDAQRQATKDAGTIAGLNVVRIINEPTAAAIAYGLDKKDGERNILVFDLGGGTFDVSMLTIDNGVFEVLATNGDTHLGGEDFDQRVMEYFIKLYKKKSGKDLRKDKRAVQKLRREVEKAKRALSTQHQTKVEIESLFDGEDFSETLTRAKFEELNMDLFRATLKPVQKVLEDSDLKKDDVHEIVLVGGSTRIPKVQQLIKEFFNGKEPSRGINPDEAVAYGAAVQGGVISGEEDTGEIVLLDVNPLTMGIETVGGVMTKLIGRNTVIPTKKSQVFSTAADNQPTVTIQVFEGERPMTKDNHQLGKFDLTGLPPAPRGVPQIEVTFEIDVNGILHVTAEDKGTGNKNKITITNDQNRLSPEDIERMINDAEKFAEDDKKVKDKAEARNELESYAYNLKNQIEDKEKLGGKLDEDDKKTIEEAVEEAISWLGSNAEASAEELKEQKKDLESKVQPIVSKLYKDAGAGGEEAPEEGSDDKDEL</sequence>
<dbReference type="EMBL" id="M26604">
    <property type="protein sequence ID" value="AAA28074.1"/>
    <property type="molecule type" value="Genomic_DNA"/>
</dbReference>
<dbReference type="EMBL" id="FO080555">
    <property type="protein sequence ID" value="CCD64632.1"/>
    <property type="molecule type" value="Genomic_DNA"/>
</dbReference>
<dbReference type="PIR" id="A32475">
    <property type="entry name" value="A32475"/>
</dbReference>
<dbReference type="PIR" id="T15513">
    <property type="entry name" value="T15513"/>
</dbReference>
<dbReference type="RefSeq" id="NP_001370435.1">
    <property type="nucleotide sequence ID" value="NM_001383595.2"/>
</dbReference>
<dbReference type="RefSeq" id="NP_509019.1">
    <property type="nucleotide sequence ID" value="NM_076618.5"/>
</dbReference>
<dbReference type="SMR" id="P27420"/>
<dbReference type="BioGRID" id="45812">
    <property type="interactions" value="71"/>
</dbReference>
<dbReference type="FunCoup" id="P27420">
    <property type="interactions" value="2370"/>
</dbReference>
<dbReference type="IntAct" id="P27420">
    <property type="interactions" value="2"/>
</dbReference>
<dbReference type="STRING" id="6239.C15H9.6a.5"/>
<dbReference type="PaxDb" id="6239-C15H9.6.1"/>
<dbReference type="PeptideAtlas" id="P27420"/>
<dbReference type="EnsemblMetazoa" id="C15H9.6a.1">
    <property type="protein sequence ID" value="C15H9.6a.1"/>
    <property type="gene ID" value="WBGene00002007"/>
</dbReference>
<dbReference type="EnsemblMetazoa" id="C15H9.6a.2">
    <property type="protein sequence ID" value="C15H9.6a.2"/>
    <property type="gene ID" value="WBGene00002007"/>
</dbReference>
<dbReference type="GeneID" id="180880"/>
<dbReference type="UCSC" id="C15H9.6.1">
    <property type="organism name" value="c. elegans"/>
</dbReference>
<dbReference type="AGR" id="WB:WBGene00002007"/>
<dbReference type="WormBase" id="C15H9.6a">
    <property type="protein sequence ID" value="CE08177"/>
    <property type="gene ID" value="WBGene00002007"/>
    <property type="gene designation" value="hsp-3"/>
</dbReference>
<dbReference type="eggNOG" id="KOG0100">
    <property type="taxonomic scope" value="Eukaryota"/>
</dbReference>
<dbReference type="HOGENOM" id="CLU_005965_7_0_1"/>
<dbReference type="InParanoid" id="P27420"/>
<dbReference type="OMA" id="VQRDIKH"/>
<dbReference type="OrthoDB" id="2401965at2759"/>
<dbReference type="PhylomeDB" id="P27420"/>
<dbReference type="Reactome" id="R-CEL-3371453">
    <property type="pathway name" value="Regulation of HSF1-mediated heat shock response"/>
</dbReference>
<dbReference type="PRO" id="PR:P27420"/>
<dbReference type="Proteomes" id="UP000001940">
    <property type="component" value="Chromosome X"/>
</dbReference>
<dbReference type="Bgee" id="WBGene00002007">
    <property type="expression patterns" value="Expressed in pharyngeal muscle cell (C elegans) and 4 other cell types or tissues"/>
</dbReference>
<dbReference type="ExpressionAtlas" id="P27420">
    <property type="expression patterns" value="baseline and differential"/>
</dbReference>
<dbReference type="GO" id="GO:0005737">
    <property type="term" value="C:cytoplasm"/>
    <property type="evidence" value="ECO:0000318"/>
    <property type="project" value="GO_Central"/>
</dbReference>
<dbReference type="GO" id="GO:0034663">
    <property type="term" value="C:endoplasmic reticulum chaperone complex"/>
    <property type="evidence" value="ECO:0000250"/>
    <property type="project" value="WormBase"/>
</dbReference>
<dbReference type="GO" id="GO:0005788">
    <property type="term" value="C:endoplasmic reticulum lumen"/>
    <property type="evidence" value="ECO:0000318"/>
    <property type="project" value="GO_Central"/>
</dbReference>
<dbReference type="GO" id="GO:0016020">
    <property type="term" value="C:membrane"/>
    <property type="evidence" value="ECO:0000318"/>
    <property type="project" value="GO_Central"/>
</dbReference>
<dbReference type="GO" id="GO:0005634">
    <property type="term" value="C:nucleus"/>
    <property type="evidence" value="ECO:0000318"/>
    <property type="project" value="GO_Central"/>
</dbReference>
<dbReference type="GO" id="GO:0005524">
    <property type="term" value="F:ATP binding"/>
    <property type="evidence" value="ECO:0007669"/>
    <property type="project" value="UniProtKB-KW"/>
</dbReference>
<dbReference type="GO" id="GO:0016887">
    <property type="term" value="F:ATP hydrolysis activity"/>
    <property type="evidence" value="ECO:0000250"/>
    <property type="project" value="WormBase"/>
</dbReference>
<dbReference type="GO" id="GO:0140662">
    <property type="term" value="F:ATP-dependent protein folding chaperone"/>
    <property type="evidence" value="ECO:0007669"/>
    <property type="project" value="InterPro"/>
</dbReference>
<dbReference type="GO" id="GO:0031072">
    <property type="term" value="F:heat shock protein binding"/>
    <property type="evidence" value="ECO:0000318"/>
    <property type="project" value="GO_Central"/>
</dbReference>
<dbReference type="GO" id="GO:0044183">
    <property type="term" value="F:protein folding chaperone"/>
    <property type="evidence" value="ECO:0000318"/>
    <property type="project" value="GO_Central"/>
</dbReference>
<dbReference type="GO" id="GO:0051085">
    <property type="term" value="P:chaperone cofactor-dependent protein refolding"/>
    <property type="evidence" value="ECO:0000318"/>
    <property type="project" value="GO_Central"/>
</dbReference>
<dbReference type="GO" id="GO:0030968">
    <property type="term" value="P:endoplasmic reticulum unfolded protein response"/>
    <property type="evidence" value="ECO:0000270"/>
    <property type="project" value="WormBase"/>
</dbReference>
<dbReference type="GO" id="GO:0036503">
    <property type="term" value="P:ERAD pathway"/>
    <property type="evidence" value="ECO:0000318"/>
    <property type="project" value="GO_Central"/>
</dbReference>
<dbReference type="GO" id="GO:0036498">
    <property type="term" value="P:IRE1-mediated unfolded protein response"/>
    <property type="evidence" value="ECO:0000270"/>
    <property type="project" value="WormBase"/>
</dbReference>
<dbReference type="GO" id="GO:0042026">
    <property type="term" value="P:protein refolding"/>
    <property type="evidence" value="ECO:0000318"/>
    <property type="project" value="GO_Central"/>
</dbReference>
<dbReference type="CDD" id="cd10241">
    <property type="entry name" value="ASKHA_NBD_HSP70_BiP"/>
    <property type="match status" value="1"/>
</dbReference>
<dbReference type="FunFam" id="3.90.640.10:FF:000153">
    <property type="entry name" value="Endoplasmic reticulum chaperone BiP"/>
    <property type="match status" value="1"/>
</dbReference>
<dbReference type="FunFam" id="2.60.34.10:FF:000002">
    <property type="entry name" value="Heat shock 70 kDa"/>
    <property type="match status" value="1"/>
</dbReference>
<dbReference type="FunFam" id="3.30.420.40:FF:000172">
    <property type="entry name" value="Heat shock 70 kDa protein"/>
    <property type="match status" value="1"/>
</dbReference>
<dbReference type="FunFam" id="3.30.30.30:FF:000001">
    <property type="entry name" value="heat shock 70 kDa protein-like"/>
    <property type="match status" value="1"/>
</dbReference>
<dbReference type="FunFam" id="3.30.420.40:FF:000026">
    <property type="entry name" value="Heat shock protein 70"/>
    <property type="match status" value="1"/>
</dbReference>
<dbReference type="FunFam" id="1.20.1270.10:FF:000056">
    <property type="entry name" value="Putative Hsp70 family ATPase KAR2"/>
    <property type="match status" value="1"/>
</dbReference>
<dbReference type="Gene3D" id="1.20.1270.10">
    <property type="match status" value="1"/>
</dbReference>
<dbReference type="Gene3D" id="3.30.420.40">
    <property type="match status" value="2"/>
</dbReference>
<dbReference type="Gene3D" id="3.90.640.10">
    <property type="entry name" value="Actin, Chain A, domain 4"/>
    <property type="match status" value="1"/>
</dbReference>
<dbReference type="Gene3D" id="2.60.34.10">
    <property type="entry name" value="Substrate Binding Domain Of DNAk, Chain A, domain 1"/>
    <property type="match status" value="1"/>
</dbReference>
<dbReference type="InterPro" id="IPR043129">
    <property type="entry name" value="ATPase_NBD"/>
</dbReference>
<dbReference type="InterPro" id="IPR042050">
    <property type="entry name" value="BIP_NBD"/>
</dbReference>
<dbReference type="InterPro" id="IPR018181">
    <property type="entry name" value="Heat_shock_70_CS"/>
</dbReference>
<dbReference type="InterPro" id="IPR029048">
    <property type="entry name" value="HSP70_C_sf"/>
</dbReference>
<dbReference type="InterPro" id="IPR029047">
    <property type="entry name" value="HSP70_peptide-bd_sf"/>
</dbReference>
<dbReference type="InterPro" id="IPR013126">
    <property type="entry name" value="Hsp_70_fam"/>
</dbReference>
<dbReference type="NCBIfam" id="NF001413">
    <property type="entry name" value="PRK00290.1"/>
    <property type="match status" value="1"/>
</dbReference>
<dbReference type="PANTHER" id="PTHR19375">
    <property type="entry name" value="HEAT SHOCK PROTEIN 70KDA"/>
    <property type="match status" value="1"/>
</dbReference>
<dbReference type="Pfam" id="PF00012">
    <property type="entry name" value="HSP70"/>
    <property type="match status" value="1"/>
</dbReference>
<dbReference type="PRINTS" id="PR00301">
    <property type="entry name" value="HEATSHOCK70"/>
</dbReference>
<dbReference type="SUPFAM" id="SSF53067">
    <property type="entry name" value="Actin-like ATPase domain"/>
    <property type="match status" value="2"/>
</dbReference>
<dbReference type="SUPFAM" id="SSF100934">
    <property type="entry name" value="Heat shock protein 70kD (HSP70), C-terminal subdomain"/>
    <property type="match status" value="1"/>
</dbReference>
<dbReference type="SUPFAM" id="SSF100920">
    <property type="entry name" value="Heat shock protein 70kD (HSP70), peptide-binding domain"/>
    <property type="match status" value="1"/>
</dbReference>
<dbReference type="PROSITE" id="PS00014">
    <property type="entry name" value="ER_TARGET"/>
    <property type="match status" value="1"/>
</dbReference>
<dbReference type="PROSITE" id="PS00297">
    <property type="entry name" value="HSP70_1"/>
    <property type="match status" value="1"/>
</dbReference>
<dbReference type="PROSITE" id="PS00329">
    <property type="entry name" value="HSP70_2"/>
    <property type="match status" value="1"/>
</dbReference>
<dbReference type="PROSITE" id="PS01036">
    <property type="entry name" value="HSP70_3"/>
    <property type="match status" value="1"/>
</dbReference>
<organism>
    <name type="scientific">Caenorhabditis elegans</name>
    <dbReference type="NCBI Taxonomy" id="6239"/>
    <lineage>
        <taxon>Eukaryota</taxon>
        <taxon>Metazoa</taxon>
        <taxon>Ecdysozoa</taxon>
        <taxon>Nematoda</taxon>
        <taxon>Chromadorea</taxon>
        <taxon>Rhabditida</taxon>
        <taxon>Rhabditina</taxon>
        <taxon>Rhabditomorpha</taxon>
        <taxon>Rhabditoidea</taxon>
        <taxon>Rhabditidae</taxon>
        <taxon>Peloderinae</taxon>
        <taxon>Caenorhabditis</taxon>
    </lineage>
</organism>
<accession>P27420</accession>
<accession>Q7JNW0</accession>
<comment type="function">
    <text evidence="1">Probably plays a role in facilitating the assembly of multimeric protein complexes inside the ER.</text>
</comment>
<comment type="subcellular location">
    <subcellularLocation>
        <location>Endoplasmic reticulum lumen</location>
    </subcellularLocation>
</comment>
<comment type="PTM">
    <text evidence="4">AMPylated by fic-1.</text>
</comment>
<comment type="similarity">
    <text evidence="5">Belongs to the heat shock protein 70 family.</text>
</comment>